<geneLocation type="chloroplast"/>
<organism>
    <name type="scientific">Solanum tuberosum</name>
    <name type="common">Potato</name>
    <dbReference type="NCBI Taxonomy" id="4113"/>
    <lineage>
        <taxon>Eukaryota</taxon>
        <taxon>Viridiplantae</taxon>
        <taxon>Streptophyta</taxon>
        <taxon>Embryophyta</taxon>
        <taxon>Tracheophyta</taxon>
        <taxon>Spermatophyta</taxon>
        <taxon>Magnoliopsida</taxon>
        <taxon>eudicotyledons</taxon>
        <taxon>Gunneridae</taxon>
        <taxon>Pentapetalae</taxon>
        <taxon>asterids</taxon>
        <taxon>lamiids</taxon>
        <taxon>Solanales</taxon>
        <taxon>Solanaceae</taxon>
        <taxon>Solanoideae</taxon>
        <taxon>Solaneae</taxon>
        <taxon>Solanum</taxon>
    </lineage>
</organism>
<feature type="chain" id="PRO_0000277577" description="Photosystem II CP47 reaction center protein">
    <location>
        <begin position="1"/>
        <end position="508"/>
    </location>
</feature>
<feature type="transmembrane region" description="Helical" evidence="1">
    <location>
        <begin position="21"/>
        <end position="36"/>
    </location>
</feature>
<feature type="transmembrane region" description="Helical" evidence="1">
    <location>
        <begin position="101"/>
        <end position="115"/>
    </location>
</feature>
<feature type="transmembrane region" description="Helical" evidence="1">
    <location>
        <begin position="140"/>
        <end position="156"/>
    </location>
</feature>
<feature type="transmembrane region" description="Helical" evidence="1">
    <location>
        <begin position="203"/>
        <end position="218"/>
    </location>
</feature>
<feature type="transmembrane region" description="Helical" evidence="1">
    <location>
        <begin position="237"/>
        <end position="252"/>
    </location>
</feature>
<feature type="transmembrane region" description="Helical" evidence="1">
    <location>
        <begin position="457"/>
        <end position="472"/>
    </location>
</feature>
<keyword id="KW-0148">Chlorophyll</keyword>
<keyword id="KW-0150">Chloroplast</keyword>
<keyword id="KW-0157">Chromophore</keyword>
<keyword id="KW-0472">Membrane</keyword>
<keyword id="KW-0602">Photosynthesis</keyword>
<keyword id="KW-0604">Photosystem II</keyword>
<keyword id="KW-0934">Plastid</keyword>
<keyword id="KW-1185">Reference proteome</keyword>
<keyword id="KW-0793">Thylakoid</keyword>
<keyword id="KW-0812">Transmembrane</keyword>
<keyword id="KW-1133">Transmembrane helix</keyword>
<name>PSBB_SOLTU</name>
<reference key="1">
    <citation type="journal article" date="2006" name="Plant Cell Rep.">
        <title>The complete chloroplast genome sequences of Solanum tuberosum and comparative analysis with Solanaceae species identified the presence of a 241-bp deletion in cultivated potato chloroplast DNA sequence.</title>
        <authorList>
            <person name="Chung H.-J."/>
            <person name="Jung J.D."/>
            <person name="Park H.-W."/>
            <person name="Kim J.-H."/>
            <person name="Cha H.W."/>
            <person name="Min S.R."/>
            <person name="Jeong W.-J."/>
            <person name="Liu J.R."/>
        </authorList>
    </citation>
    <scope>NUCLEOTIDE SEQUENCE [LARGE SCALE GENOMIC DNA]</scope>
    <source>
        <strain>cv. Desiree</strain>
    </source>
</reference>
<reference key="2">
    <citation type="submission" date="2006-02" db="EMBL/GenBank/DDBJ databases">
        <title>Complete chloroplast genome sequences of Solanum tuberosum cultivar Desiree and comparative analyses with other Solanaceae genomes.</title>
        <authorList>
            <person name="Gargano D."/>
            <person name="Scotti N."/>
            <person name="Vezzi A."/>
            <person name="Bilardi A."/>
            <person name="Valle G."/>
            <person name="Grillo S."/>
            <person name="Cardi T."/>
        </authorList>
    </citation>
    <scope>NUCLEOTIDE SEQUENCE [LARGE SCALE GENOMIC DNA]</scope>
    <source>
        <strain>cv. Desiree</strain>
    </source>
</reference>
<accession>Q2VEF4</accession>
<protein>
    <recommendedName>
        <fullName evidence="1">Photosystem II CP47 reaction center protein</fullName>
    </recommendedName>
    <alternativeName>
        <fullName evidence="1">PSII 47 kDa protein</fullName>
    </alternativeName>
    <alternativeName>
        <fullName evidence="1">Protein CP-47</fullName>
    </alternativeName>
</protein>
<gene>
    <name evidence="1" type="primary">psbB</name>
</gene>
<dbReference type="EMBL" id="DQ231562">
    <property type="protein sequence ID" value="ABB90065.1"/>
    <property type="molecule type" value="Genomic_DNA"/>
</dbReference>
<dbReference type="EMBL" id="DQ386163">
    <property type="protein sequence ID" value="ABD47082.1"/>
    <property type="molecule type" value="Genomic_DNA"/>
</dbReference>
<dbReference type="RefSeq" id="YP_635665.1">
    <property type="nucleotide sequence ID" value="NC_008096.2"/>
</dbReference>
<dbReference type="SMR" id="Q2VEF4"/>
<dbReference type="FunCoup" id="Q2VEF4">
    <property type="interactions" value="408"/>
</dbReference>
<dbReference type="STRING" id="4113.Q2VEF4"/>
<dbReference type="PaxDb" id="4113-PGSC0003DMT400096732"/>
<dbReference type="GeneID" id="4099870"/>
<dbReference type="KEGG" id="sot:4099870"/>
<dbReference type="eggNOG" id="ENOG502QRV6">
    <property type="taxonomic scope" value="Eukaryota"/>
</dbReference>
<dbReference type="InParanoid" id="Q2VEF4"/>
<dbReference type="OrthoDB" id="375at2759"/>
<dbReference type="Proteomes" id="UP000011115">
    <property type="component" value="Unassembled WGS sequence"/>
</dbReference>
<dbReference type="GO" id="GO:0009535">
    <property type="term" value="C:chloroplast thylakoid membrane"/>
    <property type="evidence" value="ECO:0007669"/>
    <property type="project" value="UniProtKB-SubCell"/>
</dbReference>
<dbReference type="GO" id="GO:0009523">
    <property type="term" value="C:photosystem II"/>
    <property type="evidence" value="ECO:0007669"/>
    <property type="project" value="UniProtKB-KW"/>
</dbReference>
<dbReference type="GO" id="GO:0016168">
    <property type="term" value="F:chlorophyll binding"/>
    <property type="evidence" value="ECO:0007669"/>
    <property type="project" value="UniProtKB-UniRule"/>
</dbReference>
<dbReference type="GO" id="GO:0045156">
    <property type="term" value="F:electron transporter, transferring electrons within the cyclic electron transport pathway of photosynthesis activity"/>
    <property type="evidence" value="ECO:0007669"/>
    <property type="project" value="InterPro"/>
</dbReference>
<dbReference type="GO" id="GO:0009772">
    <property type="term" value="P:photosynthetic electron transport in photosystem II"/>
    <property type="evidence" value="ECO:0007669"/>
    <property type="project" value="InterPro"/>
</dbReference>
<dbReference type="FunFam" id="3.10.680.10:FF:000001">
    <property type="entry name" value="Photosystem II CP47 reaction center protein"/>
    <property type="match status" value="1"/>
</dbReference>
<dbReference type="Gene3D" id="3.10.680.10">
    <property type="entry name" value="Photosystem II CP47 reaction center protein"/>
    <property type="match status" value="1"/>
</dbReference>
<dbReference type="HAMAP" id="MF_01495">
    <property type="entry name" value="PSII_PsbB_CP47"/>
    <property type="match status" value="1"/>
</dbReference>
<dbReference type="InterPro" id="IPR000932">
    <property type="entry name" value="PS_antenna-like"/>
</dbReference>
<dbReference type="InterPro" id="IPR036001">
    <property type="entry name" value="PS_II_antenna-like_sf"/>
</dbReference>
<dbReference type="InterPro" id="IPR017486">
    <property type="entry name" value="PSII_PsbB"/>
</dbReference>
<dbReference type="NCBIfam" id="TIGR03039">
    <property type="entry name" value="PS_II_CP47"/>
    <property type="match status" value="1"/>
</dbReference>
<dbReference type="PANTHER" id="PTHR33180">
    <property type="entry name" value="PHOTOSYSTEM II CP43 REACTION CENTER PROTEIN"/>
    <property type="match status" value="1"/>
</dbReference>
<dbReference type="PANTHER" id="PTHR33180:SF35">
    <property type="entry name" value="PHOTOSYSTEM II CP47 REACTION CENTER PROTEIN"/>
    <property type="match status" value="1"/>
</dbReference>
<dbReference type="Pfam" id="PF00421">
    <property type="entry name" value="PSII"/>
    <property type="match status" value="1"/>
</dbReference>
<dbReference type="SUPFAM" id="SSF161077">
    <property type="entry name" value="Photosystem II antenna protein-like"/>
    <property type="match status" value="1"/>
</dbReference>
<sequence length="508" mass="56015">MGLPWYRVHTVVLNDPGRLLSVHIMHTALVAGWAGSMALYELAVFDPSDPVLDPMWRQGMFVIPFMTRLGITNSWGGWSITGGTVTNPGIWSYEGVAGAHIVFSGLCFLAAIWHWVYWDLEIFCDERTGKPSLDLPKIFGIHLFLSGVACFGFGAFHVTGLYGPGIWVSDPYGLTGKVQPVNPAWGVEGFDPFVPGGIASHHIAAGTLGILAGLFHLSVRPPQRLYKGLRMGNIETVLSSSIAAVFFAAFVVAGTMWYGSATTPIELFGPTRYQWDQGYFQQEIYRRVSAGLAENQSLSEAWSKIPEKLAFYDYIGNNPAKGGLFRAGSMDNGDGIAVGWLGHPIFRDKEGRELFVRRMPTFFETFPVVLVDGDGIVRADVPFRRAESKYSVEQVGVTVEFYGGELNGVSYSDPATVKKYARRAQLGEIFELDRATLKSDGVFRSSPRGWFTFGHASFALLFFFGHIWHGARTLFRDVFAGIDPDLDAQVEFGAFQKLGDPTTKRQAA</sequence>
<comment type="function">
    <text evidence="1">One of the components of the core complex of photosystem II (PSII). It binds chlorophyll and helps catalyze the primary light-induced photochemical processes of PSII. PSII is a light-driven water:plastoquinone oxidoreductase, using light energy to abstract electrons from H(2)O, generating O(2) and a proton gradient subsequently used for ATP formation.</text>
</comment>
<comment type="cofactor">
    <text evidence="1">Binds multiple chlorophylls. PSII binds additional chlorophylls, carotenoids and specific lipids.</text>
</comment>
<comment type="subunit">
    <text evidence="1">PSII is composed of 1 copy each of membrane proteins PsbA, PsbB, PsbC, PsbD, PsbE, PsbF, PsbH, PsbI, PsbJ, PsbK, PsbL, PsbM, PsbT, PsbX, PsbY, PsbZ, Psb30/Ycf12, at least 3 peripheral proteins of the oxygen-evolving complex and a large number of cofactors. It forms dimeric complexes.</text>
</comment>
<comment type="subcellular location">
    <subcellularLocation>
        <location evidence="1">Plastid</location>
        <location evidence="1">Chloroplast thylakoid membrane</location>
        <topology evidence="1">Multi-pass membrane protein</topology>
    </subcellularLocation>
</comment>
<comment type="similarity">
    <text evidence="1">Belongs to the PsbB/PsbC family. PsbB subfamily.</text>
</comment>
<proteinExistence type="inferred from homology"/>
<evidence type="ECO:0000255" key="1">
    <source>
        <dbReference type="HAMAP-Rule" id="MF_01495"/>
    </source>
</evidence>